<gene>
    <name evidence="1" type="primary">bioB</name>
    <name type="ordered locus">PsycPRwf_2187</name>
</gene>
<name>BIOB_PSYWF</name>
<feature type="chain" id="PRO_0000381571" description="Biotin synthase">
    <location>
        <begin position="1"/>
        <end position="367"/>
    </location>
</feature>
<feature type="domain" description="Radical SAM core" evidence="2">
    <location>
        <begin position="67"/>
        <end position="291"/>
    </location>
</feature>
<feature type="binding site" evidence="1">
    <location>
        <position position="82"/>
    </location>
    <ligand>
        <name>[4Fe-4S] cluster</name>
        <dbReference type="ChEBI" id="CHEBI:49883"/>
        <note>4Fe-4S-S-AdoMet</note>
    </ligand>
</feature>
<feature type="binding site" evidence="1">
    <location>
        <position position="86"/>
    </location>
    <ligand>
        <name>[4Fe-4S] cluster</name>
        <dbReference type="ChEBI" id="CHEBI:49883"/>
        <note>4Fe-4S-S-AdoMet</note>
    </ligand>
</feature>
<feature type="binding site" evidence="1">
    <location>
        <position position="89"/>
    </location>
    <ligand>
        <name>[4Fe-4S] cluster</name>
        <dbReference type="ChEBI" id="CHEBI:49883"/>
        <note>4Fe-4S-S-AdoMet</note>
    </ligand>
</feature>
<feature type="binding site" evidence="1">
    <location>
        <position position="128"/>
    </location>
    <ligand>
        <name>[2Fe-2S] cluster</name>
        <dbReference type="ChEBI" id="CHEBI:190135"/>
    </ligand>
</feature>
<feature type="binding site" evidence="1">
    <location>
        <position position="159"/>
    </location>
    <ligand>
        <name>[2Fe-2S] cluster</name>
        <dbReference type="ChEBI" id="CHEBI:190135"/>
    </ligand>
</feature>
<feature type="binding site" evidence="1">
    <location>
        <position position="219"/>
    </location>
    <ligand>
        <name>[2Fe-2S] cluster</name>
        <dbReference type="ChEBI" id="CHEBI:190135"/>
    </ligand>
</feature>
<feature type="binding site" evidence="1">
    <location>
        <position position="295"/>
    </location>
    <ligand>
        <name>[2Fe-2S] cluster</name>
        <dbReference type="ChEBI" id="CHEBI:190135"/>
    </ligand>
</feature>
<proteinExistence type="inferred from homology"/>
<protein>
    <recommendedName>
        <fullName evidence="1">Biotin synthase</fullName>
        <ecNumber evidence="1">2.8.1.6</ecNumber>
    </recommendedName>
</protein>
<comment type="function">
    <text evidence="1">Catalyzes the conversion of dethiobiotin (DTB) to biotin by the insertion of a sulfur atom into dethiobiotin via a radical-based mechanism.</text>
</comment>
<comment type="catalytic activity">
    <reaction evidence="1">
        <text>(4R,5S)-dethiobiotin + (sulfur carrier)-SH + 2 reduced [2Fe-2S]-[ferredoxin] + 2 S-adenosyl-L-methionine = (sulfur carrier)-H + biotin + 2 5'-deoxyadenosine + 2 L-methionine + 2 oxidized [2Fe-2S]-[ferredoxin]</text>
        <dbReference type="Rhea" id="RHEA:22060"/>
        <dbReference type="Rhea" id="RHEA-COMP:10000"/>
        <dbReference type="Rhea" id="RHEA-COMP:10001"/>
        <dbReference type="Rhea" id="RHEA-COMP:14737"/>
        <dbReference type="Rhea" id="RHEA-COMP:14739"/>
        <dbReference type="ChEBI" id="CHEBI:17319"/>
        <dbReference type="ChEBI" id="CHEBI:29917"/>
        <dbReference type="ChEBI" id="CHEBI:33737"/>
        <dbReference type="ChEBI" id="CHEBI:33738"/>
        <dbReference type="ChEBI" id="CHEBI:57586"/>
        <dbReference type="ChEBI" id="CHEBI:57844"/>
        <dbReference type="ChEBI" id="CHEBI:59789"/>
        <dbReference type="ChEBI" id="CHEBI:64428"/>
        <dbReference type="ChEBI" id="CHEBI:149473"/>
        <dbReference type="EC" id="2.8.1.6"/>
    </reaction>
</comment>
<comment type="cofactor">
    <cofactor evidence="1">
        <name>[4Fe-4S] cluster</name>
        <dbReference type="ChEBI" id="CHEBI:49883"/>
    </cofactor>
    <text evidence="1">Binds 1 [4Fe-4S] cluster. The cluster is coordinated with 3 cysteines and an exchangeable S-adenosyl-L-methionine.</text>
</comment>
<comment type="cofactor">
    <cofactor evidence="1">
        <name>[2Fe-2S] cluster</name>
        <dbReference type="ChEBI" id="CHEBI:190135"/>
    </cofactor>
    <text evidence="1">Binds 1 [2Fe-2S] cluster. The cluster is coordinated with 3 cysteines and 1 arginine.</text>
</comment>
<comment type="pathway">
    <text evidence="1">Cofactor biosynthesis; biotin biosynthesis; biotin from 7,8-diaminononanoate: step 2/2.</text>
</comment>
<comment type="subunit">
    <text evidence="1">Homodimer.</text>
</comment>
<comment type="similarity">
    <text evidence="1">Belongs to the radical SAM superfamily. Biotin synthase family.</text>
</comment>
<reference key="1">
    <citation type="submission" date="2007-05" db="EMBL/GenBank/DDBJ databases">
        <title>Complete sequence of chromosome of Psychrobacter sp. PRwf-1.</title>
        <authorList>
            <consortium name="US DOE Joint Genome Institute"/>
            <person name="Copeland A."/>
            <person name="Lucas S."/>
            <person name="Lapidus A."/>
            <person name="Barry K."/>
            <person name="Detter J.C."/>
            <person name="Glavina del Rio T."/>
            <person name="Hammon N."/>
            <person name="Israni S."/>
            <person name="Dalin E."/>
            <person name="Tice H."/>
            <person name="Pitluck S."/>
            <person name="Chain P."/>
            <person name="Malfatti S."/>
            <person name="Shin M."/>
            <person name="Vergez L."/>
            <person name="Schmutz J."/>
            <person name="Larimer F."/>
            <person name="Land M."/>
            <person name="Hauser L."/>
            <person name="Kyrpides N."/>
            <person name="Kim E."/>
            <person name="Tiedje J."/>
            <person name="Richardson P."/>
        </authorList>
    </citation>
    <scope>NUCLEOTIDE SEQUENCE [LARGE SCALE GENOMIC DNA]</scope>
    <source>
        <strain>PRwf-1</strain>
    </source>
</reference>
<organism>
    <name type="scientific">Psychrobacter sp. (strain PRwf-1)</name>
    <dbReference type="NCBI Taxonomy" id="349106"/>
    <lineage>
        <taxon>Bacteria</taxon>
        <taxon>Pseudomonadati</taxon>
        <taxon>Pseudomonadota</taxon>
        <taxon>Gammaproteobacteria</taxon>
        <taxon>Moraxellales</taxon>
        <taxon>Moraxellaceae</taxon>
        <taxon>Psychrobacter</taxon>
    </lineage>
</organism>
<evidence type="ECO:0000255" key="1">
    <source>
        <dbReference type="HAMAP-Rule" id="MF_01694"/>
    </source>
</evidence>
<evidence type="ECO:0000255" key="2">
    <source>
        <dbReference type="PROSITE-ProRule" id="PRU01266"/>
    </source>
</evidence>
<accession>A5WHI6</accession>
<keyword id="KW-0001">2Fe-2S</keyword>
<keyword id="KW-0004">4Fe-4S</keyword>
<keyword id="KW-0093">Biotin biosynthesis</keyword>
<keyword id="KW-0408">Iron</keyword>
<keyword id="KW-0411">Iron-sulfur</keyword>
<keyword id="KW-0479">Metal-binding</keyword>
<keyword id="KW-0949">S-adenosyl-L-methionine</keyword>
<keyword id="KW-0808">Transferase</keyword>
<sequence>MSFLATLKEPGTSVCLKNEPAQSPSLHDHAPSTAAISREYIANLFDMPFMDLLLKAQGVHRQHFTANAVQISTLLSIKTGNCPEDCGYCSQSGHHRDTTGLQAEKRLEIDKVIAAAKRAKASGSSRFCMGAAWKHPSAKDMPYVAELIKEVKALGLETCMTLGMLTAEQSEQLAEAGLDYYNHNLDTSRRYYDEVVSTRSYDERLQTINHVRKSGINVCSGSIVGMGESREDRIDWVLELASMPLPPESIPVNLLVPIQGTPLGDKVLSEGQLPVLEWIRTIAVTRICCPSSYVRLSAGRESLSDAEQALAFMAGANSFFYGDKLLTTGNASQSNDDRMMQMLGLIPEAPKPKLTVIDALSGHQSQL</sequence>
<dbReference type="EC" id="2.8.1.6" evidence="1"/>
<dbReference type="EMBL" id="CP000713">
    <property type="protein sequence ID" value="ABQ95127.1"/>
    <property type="molecule type" value="Genomic_DNA"/>
</dbReference>
<dbReference type="SMR" id="A5WHI6"/>
<dbReference type="STRING" id="349106.PsycPRwf_2187"/>
<dbReference type="KEGG" id="prw:PsycPRwf_2187"/>
<dbReference type="eggNOG" id="COG0502">
    <property type="taxonomic scope" value="Bacteria"/>
</dbReference>
<dbReference type="HOGENOM" id="CLU_033172_1_2_6"/>
<dbReference type="UniPathway" id="UPA00078">
    <property type="reaction ID" value="UER00162"/>
</dbReference>
<dbReference type="GO" id="GO:0051537">
    <property type="term" value="F:2 iron, 2 sulfur cluster binding"/>
    <property type="evidence" value="ECO:0007669"/>
    <property type="project" value="UniProtKB-KW"/>
</dbReference>
<dbReference type="GO" id="GO:0051539">
    <property type="term" value="F:4 iron, 4 sulfur cluster binding"/>
    <property type="evidence" value="ECO:0007669"/>
    <property type="project" value="UniProtKB-KW"/>
</dbReference>
<dbReference type="GO" id="GO:0004076">
    <property type="term" value="F:biotin synthase activity"/>
    <property type="evidence" value="ECO:0007669"/>
    <property type="project" value="UniProtKB-UniRule"/>
</dbReference>
<dbReference type="GO" id="GO:0005506">
    <property type="term" value="F:iron ion binding"/>
    <property type="evidence" value="ECO:0007669"/>
    <property type="project" value="UniProtKB-UniRule"/>
</dbReference>
<dbReference type="GO" id="GO:0009102">
    <property type="term" value="P:biotin biosynthetic process"/>
    <property type="evidence" value="ECO:0007669"/>
    <property type="project" value="UniProtKB-UniRule"/>
</dbReference>
<dbReference type="CDD" id="cd01335">
    <property type="entry name" value="Radical_SAM"/>
    <property type="match status" value="1"/>
</dbReference>
<dbReference type="Gene3D" id="3.20.20.70">
    <property type="entry name" value="Aldolase class I"/>
    <property type="match status" value="1"/>
</dbReference>
<dbReference type="HAMAP" id="MF_01694">
    <property type="entry name" value="BioB"/>
    <property type="match status" value="1"/>
</dbReference>
<dbReference type="InterPro" id="IPR013785">
    <property type="entry name" value="Aldolase_TIM"/>
</dbReference>
<dbReference type="InterPro" id="IPR010722">
    <property type="entry name" value="BATS_dom"/>
</dbReference>
<dbReference type="InterPro" id="IPR002684">
    <property type="entry name" value="Biotin_synth/BioAB"/>
</dbReference>
<dbReference type="InterPro" id="IPR024177">
    <property type="entry name" value="Biotin_synthase"/>
</dbReference>
<dbReference type="InterPro" id="IPR006638">
    <property type="entry name" value="Elp3/MiaA/NifB-like_rSAM"/>
</dbReference>
<dbReference type="InterPro" id="IPR007197">
    <property type="entry name" value="rSAM"/>
</dbReference>
<dbReference type="NCBIfam" id="TIGR00433">
    <property type="entry name" value="bioB"/>
    <property type="match status" value="1"/>
</dbReference>
<dbReference type="PANTHER" id="PTHR22976">
    <property type="entry name" value="BIOTIN SYNTHASE"/>
    <property type="match status" value="1"/>
</dbReference>
<dbReference type="PANTHER" id="PTHR22976:SF2">
    <property type="entry name" value="BIOTIN SYNTHASE, MITOCHONDRIAL"/>
    <property type="match status" value="1"/>
</dbReference>
<dbReference type="Pfam" id="PF06968">
    <property type="entry name" value="BATS"/>
    <property type="match status" value="1"/>
</dbReference>
<dbReference type="Pfam" id="PF04055">
    <property type="entry name" value="Radical_SAM"/>
    <property type="match status" value="1"/>
</dbReference>
<dbReference type="PIRSF" id="PIRSF001619">
    <property type="entry name" value="Biotin_synth"/>
    <property type="match status" value="1"/>
</dbReference>
<dbReference type="SFLD" id="SFLDF00272">
    <property type="entry name" value="biotin_synthase"/>
    <property type="match status" value="1"/>
</dbReference>
<dbReference type="SFLD" id="SFLDG01278">
    <property type="entry name" value="biotin_synthase_like"/>
    <property type="match status" value="1"/>
</dbReference>
<dbReference type="SMART" id="SM00876">
    <property type="entry name" value="BATS"/>
    <property type="match status" value="1"/>
</dbReference>
<dbReference type="SMART" id="SM00729">
    <property type="entry name" value="Elp3"/>
    <property type="match status" value="1"/>
</dbReference>
<dbReference type="SUPFAM" id="SSF102114">
    <property type="entry name" value="Radical SAM enzymes"/>
    <property type="match status" value="1"/>
</dbReference>
<dbReference type="PROSITE" id="PS51918">
    <property type="entry name" value="RADICAL_SAM"/>
    <property type="match status" value="1"/>
</dbReference>